<reference evidence="14" key="1">
    <citation type="journal article" date="2018" name="Nature">
        <title>Improved reference genome of Aedes aegypti informs arbovirus vector control.</title>
        <authorList>
            <person name="Matthews B.J."/>
            <person name="Dudchenko O."/>
            <person name="Kingan S.B."/>
            <person name="Koren S."/>
            <person name="Antoshechkin I."/>
            <person name="Crawford J.E."/>
            <person name="Glassford W.J."/>
            <person name="Herre M."/>
            <person name="Redmond S.N."/>
            <person name="Rose N.H."/>
            <person name="Weedall G.D."/>
            <person name="Wu Y."/>
            <person name="Batra S.S."/>
            <person name="Brito-Sierra C.A."/>
            <person name="Buckingham S.D."/>
            <person name="Campbell C.L."/>
            <person name="Chan S."/>
            <person name="Cox E."/>
            <person name="Evans B.R."/>
            <person name="Fansiri T."/>
            <person name="Filipovic I."/>
            <person name="Fontaine A."/>
            <person name="Gloria-Soria A."/>
            <person name="Hall R."/>
            <person name="Joardar V.S."/>
            <person name="Jones A.K."/>
            <person name="Kay R.G.G."/>
            <person name="Kodali V.K."/>
            <person name="Lee J."/>
            <person name="Lycett G.J."/>
            <person name="Mitchell S.N."/>
            <person name="Muehling J."/>
            <person name="Murphy M.R."/>
            <person name="Omer A.D."/>
            <person name="Partridge F.A."/>
            <person name="Peluso P."/>
            <person name="Aiden A.P."/>
            <person name="Ramasamy V."/>
            <person name="Rasic G."/>
            <person name="Roy S."/>
            <person name="Saavedra-Rodriguez K."/>
            <person name="Sharan S."/>
            <person name="Sharma A."/>
            <person name="Smith M.L."/>
            <person name="Turner J."/>
            <person name="Weakley A.M."/>
            <person name="Zhao Z."/>
            <person name="Akbari O.S."/>
            <person name="Black W.C. IV"/>
            <person name="Cao H."/>
            <person name="Darby A.C."/>
            <person name="Hill C.A."/>
            <person name="Johnston J.S."/>
            <person name="Murphy T.D."/>
            <person name="Raikhel A.S."/>
            <person name="Sattelle D.B."/>
            <person name="Sharakhov I.V."/>
            <person name="White B.J."/>
            <person name="Zhao L."/>
            <person name="Aiden E.L."/>
            <person name="Mann R.S."/>
            <person name="Lambrechts L."/>
            <person name="Powell J.R."/>
            <person name="Sharakhova M.V."/>
            <person name="Tu Z."/>
            <person name="Robertson H.M."/>
            <person name="McBride C.S."/>
            <person name="Hastie A.R."/>
            <person name="Korlach J."/>
            <person name="Neafsey D.E."/>
            <person name="Phillippy A.M."/>
            <person name="Vosshall L.B."/>
        </authorList>
    </citation>
    <scope>NUCLEOTIDE SEQUENCE [LARGE SCALE GENOMIC DNA]</scope>
    <source>
        <strain evidence="14">LVP_AGWG</strain>
    </source>
</reference>
<reference evidence="12" key="2">
    <citation type="journal article" date="2006" name="Cell. Microbiol.">
        <title>A mosquito-specific protein family includes candidate receptors for malaria sporozoite invasion of salivary glands.</title>
        <authorList>
            <person name="Korochkina S."/>
            <person name="Barreau C."/>
            <person name="Pradel G."/>
            <person name="Jeffery E."/>
            <person name="Li J."/>
            <person name="Natarajan R."/>
            <person name="Shabanowitz J."/>
            <person name="Hunt D."/>
            <person name="Frevert U."/>
            <person name="Vernick K.D."/>
        </authorList>
    </citation>
    <scope>FUNCTION (MICROBIAL INFECTION)</scope>
    <scope>SUBCELLULAR LOCATION</scope>
    <scope>TISSUE SPECIFICITY</scope>
    <scope>DEVELOPMENTAL STAGE</scope>
    <scope>INDUCTION</scope>
</reference>
<reference key="3">
    <citation type="journal article" date="2007" name="Microbes Infect.">
        <title>Antibody response against saliva antigens of Anopheles gambiae and Aedes aegypti in travellers in tropical Africa.</title>
        <authorList>
            <person name="Orlandi-Pradines E."/>
            <person name="Almeras L."/>
            <person name="Denis de Senneville L."/>
            <person name="Barbe S."/>
            <person name="Remoue F."/>
            <person name="Villard C."/>
            <person name="Cornelie S."/>
            <person name="Penhoat K."/>
            <person name="Pascual A."/>
            <person name="Bourgouin C."/>
            <person name="Fontenille D."/>
            <person name="Bonnet J."/>
            <person name="Corre-Catelin N."/>
            <person name="Reiter P."/>
            <person name="Pages F."/>
            <person name="Laffite D."/>
            <person name="Boulanger D."/>
            <person name="Simondon F."/>
            <person name="Pradines B."/>
            <person name="Fusai T."/>
            <person name="Rogier C."/>
        </authorList>
    </citation>
    <scope>IDENTIFICATION BY MASS SPECTROMETRY</scope>
    <scope>SUBCELLULAR LOCATION</scope>
    <scope>TISSUE SPECIFICITY</scope>
</reference>
<reference evidence="12" key="4">
    <citation type="journal article" date="2021" name="Malar. J.">
        <title>Aedes aegypti SGS1 is critical for Plasmodium gallinaceum infection of both the mosquito midgut and salivary glands.</title>
        <authorList>
            <person name="Kojin B.B."/>
            <person name="Martin-Martin I."/>
            <person name="Araujo H.R.C."/>
            <person name="Bonilla B."/>
            <person name="Molina-Cruz A."/>
            <person name="Calvo E."/>
            <person name="Capurro M.L."/>
            <person name="Adelman Z.N."/>
        </authorList>
    </citation>
    <scope>FUNCTION (MICROBIAL INFECTION)</scope>
    <scope>TISSUE SPECIFICITY</scope>
    <scope>PUTATIVE PROTEOLYTIC CLEAVAGE</scope>
    <scope>DISRUPTION PHENOTYPE (MICROBIAL INFECTION)</scope>
</reference>
<reference evidence="12" key="5">
    <citation type="journal article" date="2021" name="Sci. Rep.">
        <title>High resolution proteomics of Aedes aegypti salivary glands infected with either dengue, Zika or chikungunya viruses identify new virus specific and broad antiviral factors.</title>
        <authorList>
            <person name="Chowdhury A."/>
            <person name="Modahl C.M."/>
            <person name="Misse D."/>
            <person name="Kini R.M."/>
            <person name="Pompon J."/>
        </authorList>
    </citation>
    <scope>IDENTIFICATION BY MASS SPECTROMETRY</scope>
    <scope>FUNCTION (MICROBIAL INFECTION)</scope>
    <scope>TISSUE SPECIFICITY</scope>
    <scope>INDUCTION (MICROBIAL INFECTION)</scope>
    <scope>DISRUPTION PHENOTYPE (MICROBIAL INFECTION)</scope>
</reference>
<reference evidence="15" key="6">
    <citation type="journal article" date="2023" name="Nat. Commun.">
        <title>Native structure of mosquito salivary protein uncovers domains relevant to pathogen transmission.</title>
        <authorList>
            <person name="Liu S."/>
            <person name="Xia X."/>
            <person name="Calvo E."/>
            <person name="Zhou Z.H."/>
        </authorList>
    </citation>
    <scope>STRUCTURE BY ELECTRON MICROSCOPY (3.30 ANGSTROMS)</scope>
    <scope>IDENTIFICATION BY MASS SPECTROMETRY</scope>
    <scope>TISSUE SPECIFICITY</scope>
    <scope>PUTATIVE PROTEOLYTIC CLEAVAGE</scope>
    <scope>DISULFIDE BONDS</scope>
</reference>
<proteinExistence type="evidence at protein level"/>
<organism evidence="14">
    <name type="scientific">Aedes aegypti</name>
    <name type="common">Yellowfever mosquito</name>
    <name type="synonym">Culex aegypti</name>
    <dbReference type="NCBI Taxonomy" id="7159"/>
    <lineage>
        <taxon>Eukaryota</taxon>
        <taxon>Metazoa</taxon>
        <taxon>Ecdysozoa</taxon>
        <taxon>Arthropoda</taxon>
        <taxon>Hexapoda</taxon>
        <taxon>Insecta</taxon>
        <taxon>Pterygota</taxon>
        <taxon>Neoptera</taxon>
        <taxon>Endopterygota</taxon>
        <taxon>Diptera</taxon>
        <taxon>Nematocera</taxon>
        <taxon>Culicoidea</taxon>
        <taxon>Culicidae</taxon>
        <taxon>Culicinae</taxon>
        <taxon>Aedini</taxon>
        <taxon>Aedes</taxon>
        <taxon>Stegomyia</taxon>
    </lineage>
</organism>
<protein>
    <recommendedName>
        <fullName evidence="11">Salivary gland surface protein 1</fullName>
        <shortName evidence="10 11">SGS1</shortName>
        <shortName evidence="8 9">aaSGS1</shortName>
    </recommendedName>
    <alternativeName>
        <fullName evidence="13">Tox-SGS domain-containing protein</fullName>
    </alternativeName>
</protein>
<accession>A0A1S4FPC9</accession>
<name>SGS1_AEDAE</name>
<comment type="function">
    <text evidence="3 5">(Microbial infection) Facilitates, but is not essential for, invasion of salivary glands by Plasmodium gallinaceum (PubMed:16367875, PubMed:33407511). Plays a role in Plasmodium gallinaceum oocyst development in mosquito midgut (PubMed:33407511).</text>
</comment>
<comment type="function">
    <text evidence="6">(Microbial infection) Probably facilitates Zika virus replication in salivary glands.</text>
</comment>
<comment type="subcellular location">
    <subcellularLocation>
        <location evidence="3">Cell membrane</location>
        <topology evidence="1">Multi-pass membrane protein</topology>
    </subcellularLocation>
    <subcellularLocation>
        <location evidence="4">Secreted</location>
    </subcellularLocation>
</comment>
<comment type="tissue specificity">
    <text evidence="3 4 5 6 7">Female saliva (at protein level) (PubMed:17913537). Female salivary gland (at protein level) (PubMed:16367875, PubMed:33407511, PubMed:34880409, PubMed:36797290). Not detected in female carcass without salivary glands (PubMed:16367875). Not detected in male tissues (PubMed:16367875).</text>
</comment>
<comment type="developmental stage">
    <text evidence="3">Not detected in larvae or early pupae of either sex (PubMed:16367875). Transcription starts in late female pupae (PubMed:16367875). Full expression is seen only in adult female mosquitoes (PubMed:16367875).</text>
</comment>
<comment type="induction">
    <text evidence="3">Blood feeding does not alter expression levels.</text>
</comment>
<comment type="induction">
    <text evidence="6">(Microbial infection) Up-regulated in salivary glands following infection with dengue virus type 2, Zika or chikungunya viruses (at protein level).</text>
</comment>
<comment type="PTM">
    <text evidence="5 7">Probably cleaved at the C-terminus.</text>
</comment>
<comment type="disruption phenotype">
    <text evidence="5">(Microbial infection) RNAi-mediated knockdown results in lower number of Plasmodium gallinaceum sporozoites invading salivary glands.</text>
</comment>
<comment type="disruption phenotype">
    <text evidence="6">(Microbial infection) RNAi-mediated knockdown results in lower levels of Zika virus replication in salivary glands after infection.</text>
</comment>
<comment type="miscellaneous">
    <text evidence="3">Antibodies against the protein inoculated into infected mosquitoes before rupture of midgut oocysts inhibit Plasmodium gallinaceum sporozoite invasion into mosquito salivary glands.</text>
</comment>
<keyword id="KW-0002">3D-structure</keyword>
<keyword id="KW-1003">Cell membrane</keyword>
<keyword id="KW-1015">Disulfide bond</keyword>
<keyword id="KW-0325">Glycoprotein</keyword>
<keyword id="KW-0472">Membrane</keyword>
<keyword id="KW-1185">Reference proteome</keyword>
<keyword id="KW-0964">Secreted</keyword>
<keyword id="KW-0812">Transmembrane</keyword>
<keyword id="KW-1133">Transmembrane helix</keyword>
<feature type="chain" id="PRO_0000461335" description="Salivary gland surface protein 1">
    <location>
        <begin position="1"/>
        <end position="3364"/>
    </location>
</feature>
<feature type="transmembrane region" description="Helical" evidence="1">
    <location>
        <begin position="2734"/>
        <end position="2754"/>
    </location>
</feature>
<feature type="transmembrane region" description="Helical" evidence="1">
    <location>
        <begin position="2774"/>
        <end position="2794"/>
    </location>
</feature>
<feature type="transmembrane region" description="Helical" evidence="1">
    <location>
        <begin position="2805"/>
        <end position="2825"/>
    </location>
</feature>
<feature type="transmembrane region" description="Helical" evidence="1">
    <location>
        <begin position="2844"/>
        <end position="2864"/>
    </location>
</feature>
<feature type="transmembrane region" description="Helical" evidence="1">
    <location>
        <begin position="2878"/>
        <end position="2898"/>
    </location>
</feature>
<feature type="region of interest" description="Beta-propeller 1" evidence="7 15">
    <location>
        <begin position="1"/>
        <end position="344"/>
    </location>
</feature>
<feature type="region of interest" description="Rhs/YD-repeats" evidence="7 15">
    <location>
        <begin position="345"/>
        <end position="2733"/>
    </location>
</feature>
<feature type="region of interest" description="Beta-propeller 2" evidence="7 15">
    <location>
        <begin position="705"/>
        <end position="1216"/>
    </location>
</feature>
<feature type="region of interest" description="Carbohydrate-binding module (CBM)" evidence="7 15">
    <location>
        <begin position="1345"/>
        <end position="1494"/>
    </location>
</feature>
<feature type="region of interest" description="Lectin carbohydrate-recognition domain (lectin-CRD)" evidence="7 15">
    <location>
        <begin position="1575"/>
        <end position="1715"/>
    </location>
</feature>
<feature type="region of interest" description="Wedge domain" evidence="7 15">
    <location>
        <begin position="2225"/>
        <end position="2304"/>
    </location>
</feature>
<feature type="region of interest" description="Tox-SGS" evidence="1">
    <location>
        <begin position="3126"/>
        <end position="3216"/>
    </location>
</feature>
<feature type="glycosylation site" description="N-linked (GlcNAc...) asparagine" evidence="2">
    <location>
        <position position="59"/>
    </location>
</feature>
<feature type="glycosylation site" description="N-linked (GlcNAc...) asparagine" evidence="2">
    <location>
        <position position="1149"/>
    </location>
</feature>
<feature type="disulfide bond" evidence="7 15">
    <location>
        <begin position="251"/>
        <end position="297"/>
    </location>
</feature>
<feature type="disulfide bond" evidence="7 15">
    <location>
        <begin position="1128"/>
        <end position="1139"/>
    </location>
</feature>
<feature type="disulfide bond" evidence="7 15">
    <location>
        <begin position="2253"/>
        <end position="2285"/>
    </location>
</feature>
<feature type="disulfide bond" evidence="7 15">
    <location>
        <begin position="2407"/>
        <end position="2421"/>
    </location>
</feature>
<feature type="strand" evidence="16">
    <location>
        <begin position="2"/>
        <end position="9"/>
    </location>
</feature>
<feature type="strand" evidence="16">
    <location>
        <begin position="22"/>
        <end position="25"/>
    </location>
</feature>
<feature type="strand" evidence="16">
    <location>
        <begin position="38"/>
        <end position="42"/>
    </location>
</feature>
<feature type="strand" evidence="16">
    <location>
        <begin position="45"/>
        <end position="50"/>
    </location>
</feature>
<feature type="turn" evidence="16">
    <location>
        <begin position="51"/>
        <end position="54"/>
    </location>
</feature>
<feature type="strand" evidence="16">
    <location>
        <begin position="55"/>
        <end position="60"/>
    </location>
</feature>
<feature type="strand" evidence="16">
    <location>
        <begin position="70"/>
        <end position="72"/>
    </location>
</feature>
<feature type="strand" evidence="16">
    <location>
        <begin position="74"/>
        <end position="79"/>
    </location>
</feature>
<feature type="strand" evidence="16">
    <location>
        <begin position="82"/>
        <end position="88"/>
    </location>
</feature>
<feature type="strand" evidence="16">
    <location>
        <begin position="94"/>
        <end position="100"/>
    </location>
</feature>
<feature type="strand" evidence="16">
    <location>
        <begin position="123"/>
        <end position="129"/>
    </location>
</feature>
<feature type="strand" evidence="16">
    <location>
        <begin position="132"/>
        <end position="138"/>
    </location>
</feature>
<feature type="strand" evidence="16">
    <location>
        <begin position="176"/>
        <end position="180"/>
    </location>
</feature>
<feature type="strand" evidence="16">
    <location>
        <begin position="182"/>
        <end position="187"/>
    </location>
</feature>
<feature type="strand" evidence="16">
    <location>
        <begin position="189"/>
        <end position="198"/>
    </location>
</feature>
<feature type="strand" evidence="16">
    <location>
        <begin position="201"/>
        <end position="206"/>
    </location>
</feature>
<feature type="strand" evidence="16">
    <location>
        <begin position="217"/>
        <end position="221"/>
    </location>
</feature>
<feature type="strand" evidence="16">
    <location>
        <begin position="225"/>
        <end position="230"/>
    </location>
</feature>
<feature type="strand" evidence="16">
    <location>
        <begin position="235"/>
        <end position="239"/>
    </location>
</feature>
<feature type="strand" evidence="16">
    <location>
        <begin position="241"/>
        <end position="243"/>
    </location>
</feature>
<feature type="strand" evidence="16">
    <location>
        <begin position="246"/>
        <end position="251"/>
    </location>
</feature>
<feature type="strand" evidence="16">
    <location>
        <begin position="253"/>
        <end position="255"/>
    </location>
</feature>
<feature type="turn" evidence="16">
    <location>
        <begin position="256"/>
        <end position="259"/>
    </location>
</feature>
<feature type="helix" evidence="16">
    <location>
        <begin position="262"/>
        <end position="265"/>
    </location>
</feature>
<feature type="strand" evidence="16">
    <location>
        <begin position="269"/>
        <end position="272"/>
    </location>
</feature>
<feature type="strand" evidence="16">
    <location>
        <begin position="274"/>
        <end position="276"/>
    </location>
</feature>
<feature type="strand" evidence="16">
    <location>
        <begin position="278"/>
        <end position="283"/>
    </location>
</feature>
<feature type="strand" evidence="16">
    <location>
        <begin position="285"/>
        <end position="292"/>
    </location>
</feature>
<feature type="strand" evidence="16">
    <location>
        <begin position="294"/>
        <end position="296"/>
    </location>
</feature>
<feature type="strand" evidence="16">
    <location>
        <begin position="300"/>
        <end position="302"/>
    </location>
</feature>
<feature type="strand" evidence="16">
    <location>
        <begin position="307"/>
        <end position="310"/>
    </location>
</feature>
<feature type="strand" evidence="16">
    <location>
        <begin position="318"/>
        <end position="320"/>
    </location>
</feature>
<feature type="strand" evidence="16">
    <location>
        <begin position="323"/>
        <end position="329"/>
    </location>
</feature>
<feature type="strand" evidence="16">
    <location>
        <begin position="334"/>
        <end position="340"/>
    </location>
</feature>
<feature type="strand" evidence="16">
    <location>
        <begin position="360"/>
        <end position="362"/>
    </location>
</feature>
<feature type="strand" evidence="16">
    <location>
        <begin position="368"/>
        <end position="372"/>
    </location>
</feature>
<feature type="helix" evidence="16">
    <location>
        <begin position="384"/>
        <end position="387"/>
    </location>
</feature>
<feature type="helix" evidence="16">
    <location>
        <begin position="391"/>
        <end position="393"/>
    </location>
</feature>
<feature type="turn" evidence="16">
    <location>
        <begin position="399"/>
        <end position="401"/>
    </location>
</feature>
<feature type="strand" evidence="16">
    <location>
        <begin position="404"/>
        <end position="413"/>
    </location>
</feature>
<feature type="strand" evidence="16">
    <location>
        <begin position="417"/>
        <end position="419"/>
    </location>
</feature>
<feature type="strand" evidence="16">
    <location>
        <begin position="421"/>
        <end position="428"/>
    </location>
</feature>
<feature type="strand" evidence="16">
    <location>
        <begin position="442"/>
        <end position="444"/>
    </location>
</feature>
<feature type="strand" evidence="16">
    <location>
        <begin position="447"/>
        <end position="452"/>
    </location>
</feature>
<feature type="turn" evidence="16">
    <location>
        <begin position="459"/>
        <end position="461"/>
    </location>
</feature>
<feature type="strand" evidence="16">
    <location>
        <begin position="463"/>
        <end position="468"/>
    </location>
</feature>
<feature type="strand" evidence="16">
    <location>
        <begin position="471"/>
        <end position="477"/>
    </location>
</feature>
<feature type="strand" evidence="16">
    <location>
        <begin position="486"/>
        <end position="492"/>
    </location>
</feature>
<feature type="strand" evidence="16">
    <location>
        <begin position="495"/>
        <end position="503"/>
    </location>
</feature>
<feature type="turn" evidence="16">
    <location>
        <begin position="504"/>
        <end position="507"/>
    </location>
</feature>
<feature type="strand" evidence="16">
    <location>
        <begin position="508"/>
        <end position="512"/>
    </location>
</feature>
<feature type="strand" evidence="16">
    <location>
        <begin position="514"/>
        <end position="520"/>
    </location>
</feature>
<feature type="helix" evidence="16">
    <location>
        <begin position="523"/>
        <end position="525"/>
    </location>
</feature>
<feature type="strand" evidence="16">
    <location>
        <begin position="527"/>
        <end position="530"/>
    </location>
</feature>
<feature type="strand" evidence="16">
    <location>
        <begin position="540"/>
        <end position="542"/>
    </location>
</feature>
<feature type="strand" evidence="16">
    <location>
        <begin position="545"/>
        <end position="547"/>
    </location>
</feature>
<feature type="strand" evidence="16">
    <location>
        <begin position="549"/>
        <end position="563"/>
    </location>
</feature>
<feature type="strand" evidence="16">
    <location>
        <begin position="567"/>
        <end position="572"/>
    </location>
</feature>
<feature type="strand" evidence="16">
    <location>
        <begin position="577"/>
        <end position="579"/>
    </location>
</feature>
<feature type="strand" evidence="16">
    <location>
        <begin position="584"/>
        <end position="588"/>
    </location>
</feature>
<feature type="strand" evidence="16">
    <location>
        <begin position="590"/>
        <end position="592"/>
    </location>
</feature>
<feature type="strand" evidence="16">
    <location>
        <begin position="595"/>
        <end position="602"/>
    </location>
</feature>
<feature type="strand" evidence="16">
    <location>
        <begin position="604"/>
        <end position="607"/>
    </location>
</feature>
<feature type="strand" evidence="16">
    <location>
        <begin position="614"/>
        <end position="616"/>
    </location>
</feature>
<feature type="strand" evidence="16">
    <location>
        <begin position="624"/>
        <end position="632"/>
    </location>
</feature>
<feature type="strand" evidence="16">
    <location>
        <begin position="637"/>
        <end position="647"/>
    </location>
</feature>
<feature type="strand" evidence="16">
    <location>
        <begin position="650"/>
        <end position="658"/>
    </location>
</feature>
<feature type="strand" evidence="16">
    <location>
        <begin position="665"/>
        <end position="671"/>
    </location>
</feature>
<feature type="strand" evidence="16">
    <location>
        <begin position="673"/>
        <end position="677"/>
    </location>
</feature>
<feature type="strand" evidence="16">
    <location>
        <begin position="679"/>
        <end position="684"/>
    </location>
</feature>
<feature type="strand" evidence="16">
    <location>
        <begin position="690"/>
        <end position="702"/>
    </location>
</feature>
<feature type="turn" evidence="16">
    <location>
        <begin position="703"/>
        <end position="705"/>
    </location>
</feature>
<feature type="strand" evidence="16">
    <location>
        <begin position="707"/>
        <end position="709"/>
    </location>
</feature>
<feature type="strand" evidence="16">
    <location>
        <begin position="713"/>
        <end position="716"/>
    </location>
</feature>
<feature type="strand" evidence="16">
    <location>
        <begin position="722"/>
        <end position="727"/>
    </location>
</feature>
<feature type="strand" evidence="16">
    <location>
        <begin position="732"/>
        <end position="739"/>
    </location>
</feature>
<feature type="strand" evidence="16">
    <location>
        <begin position="743"/>
        <end position="748"/>
    </location>
</feature>
<feature type="strand" evidence="16">
    <location>
        <begin position="752"/>
        <end position="755"/>
    </location>
</feature>
<feature type="strand" evidence="16">
    <location>
        <begin position="758"/>
        <end position="760"/>
    </location>
</feature>
<feature type="strand" evidence="16">
    <location>
        <begin position="762"/>
        <end position="770"/>
    </location>
</feature>
<feature type="strand" evidence="16">
    <location>
        <begin position="772"/>
        <end position="783"/>
    </location>
</feature>
<feature type="turn" evidence="16">
    <location>
        <begin position="784"/>
        <end position="786"/>
    </location>
</feature>
<feature type="strand" evidence="16">
    <location>
        <begin position="787"/>
        <end position="796"/>
    </location>
</feature>
<feature type="strand" evidence="16">
    <location>
        <begin position="799"/>
        <end position="801"/>
    </location>
</feature>
<feature type="strand" evidence="16">
    <location>
        <begin position="811"/>
        <end position="815"/>
    </location>
</feature>
<feature type="strand" evidence="16">
    <location>
        <begin position="821"/>
        <end position="824"/>
    </location>
</feature>
<feature type="strand" evidence="16">
    <location>
        <begin position="826"/>
        <end position="832"/>
    </location>
</feature>
<feature type="strand" evidence="16">
    <location>
        <begin position="837"/>
        <end position="841"/>
    </location>
</feature>
<feature type="strand" evidence="16">
    <location>
        <begin position="850"/>
        <end position="854"/>
    </location>
</feature>
<feature type="strand" evidence="16">
    <location>
        <begin position="866"/>
        <end position="869"/>
    </location>
</feature>
<feature type="strand" evidence="16">
    <location>
        <begin position="873"/>
        <end position="875"/>
    </location>
</feature>
<feature type="strand" evidence="16">
    <location>
        <begin position="877"/>
        <end position="881"/>
    </location>
</feature>
<feature type="strand" evidence="16">
    <location>
        <begin position="887"/>
        <end position="891"/>
    </location>
</feature>
<feature type="strand" evidence="16">
    <location>
        <begin position="894"/>
        <end position="896"/>
    </location>
</feature>
<feature type="helix" evidence="16">
    <location>
        <begin position="900"/>
        <end position="909"/>
    </location>
</feature>
<feature type="helix" evidence="16">
    <location>
        <begin position="921"/>
        <end position="941"/>
    </location>
</feature>
<feature type="strand" evidence="16">
    <location>
        <begin position="943"/>
        <end position="947"/>
    </location>
</feature>
<feature type="strand" evidence="16">
    <location>
        <begin position="950"/>
        <end position="958"/>
    </location>
</feature>
<feature type="strand" evidence="16">
    <location>
        <begin position="964"/>
        <end position="973"/>
    </location>
</feature>
<feature type="strand" evidence="16">
    <location>
        <begin position="977"/>
        <end position="989"/>
    </location>
</feature>
<feature type="turn" evidence="16">
    <location>
        <begin position="992"/>
        <end position="994"/>
    </location>
</feature>
<feature type="strand" evidence="16">
    <location>
        <begin position="996"/>
        <end position="1001"/>
    </location>
</feature>
<feature type="turn" evidence="16">
    <location>
        <begin position="1004"/>
        <end position="1006"/>
    </location>
</feature>
<feature type="strand" evidence="16">
    <location>
        <begin position="1014"/>
        <end position="1023"/>
    </location>
</feature>
<feature type="strand" evidence="16">
    <location>
        <begin position="1026"/>
        <end position="1035"/>
    </location>
</feature>
<feature type="helix" evidence="16">
    <location>
        <begin position="1046"/>
        <end position="1059"/>
    </location>
</feature>
<feature type="helix" evidence="16">
    <location>
        <begin position="1065"/>
        <end position="1068"/>
    </location>
</feature>
<feature type="strand" evidence="16">
    <location>
        <begin position="1077"/>
        <end position="1079"/>
    </location>
</feature>
<feature type="strand" evidence="16">
    <location>
        <begin position="1082"/>
        <end position="1087"/>
    </location>
</feature>
<feature type="strand" evidence="16">
    <location>
        <begin position="1090"/>
        <end position="1095"/>
    </location>
</feature>
<feature type="helix" evidence="16">
    <location>
        <begin position="1098"/>
        <end position="1101"/>
    </location>
</feature>
<feature type="strand" evidence="16">
    <location>
        <begin position="1104"/>
        <end position="1109"/>
    </location>
</feature>
<feature type="strand" evidence="16">
    <location>
        <begin position="1111"/>
        <end position="1118"/>
    </location>
</feature>
<feature type="strand" evidence="16">
    <location>
        <begin position="1120"/>
        <end position="1123"/>
    </location>
</feature>
<feature type="strand" evidence="16">
    <location>
        <begin position="1126"/>
        <end position="1129"/>
    </location>
</feature>
<feature type="strand" evidence="16">
    <location>
        <begin position="1138"/>
        <end position="1141"/>
    </location>
</feature>
<feature type="strand" evidence="16">
    <location>
        <begin position="1147"/>
        <end position="1149"/>
    </location>
</feature>
<feature type="strand" evidence="16">
    <location>
        <begin position="1158"/>
        <end position="1162"/>
    </location>
</feature>
<feature type="strand" evidence="16">
    <location>
        <begin position="1165"/>
        <end position="1169"/>
    </location>
</feature>
<feature type="helix" evidence="16">
    <location>
        <begin position="1173"/>
        <end position="1175"/>
    </location>
</feature>
<feature type="strand" evidence="16">
    <location>
        <begin position="1182"/>
        <end position="1184"/>
    </location>
</feature>
<feature type="strand" evidence="16">
    <location>
        <begin position="1187"/>
        <end position="1189"/>
    </location>
</feature>
<feature type="strand" evidence="16">
    <location>
        <begin position="1195"/>
        <end position="1202"/>
    </location>
</feature>
<feature type="turn" evidence="16">
    <location>
        <begin position="1203"/>
        <end position="1205"/>
    </location>
</feature>
<feature type="strand" evidence="16">
    <location>
        <begin position="1208"/>
        <end position="1212"/>
    </location>
</feature>
<feature type="helix" evidence="16">
    <location>
        <begin position="1213"/>
        <end position="1215"/>
    </location>
</feature>
<feature type="strand" evidence="16">
    <location>
        <begin position="1220"/>
        <end position="1233"/>
    </location>
</feature>
<feature type="strand" evidence="16">
    <location>
        <begin position="1238"/>
        <end position="1251"/>
    </location>
</feature>
<feature type="strand" evidence="16">
    <location>
        <begin position="1254"/>
        <end position="1266"/>
    </location>
</feature>
<feature type="helix" evidence="16">
    <location>
        <begin position="1268"/>
        <end position="1271"/>
    </location>
</feature>
<feature type="strand" evidence="16">
    <location>
        <begin position="1273"/>
        <end position="1278"/>
    </location>
</feature>
<feature type="turn" evidence="16">
    <location>
        <begin position="1280"/>
        <end position="1282"/>
    </location>
</feature>
<feature type="strand" evidence="16">
    <location>
        <begin position="1285"/>
        <end position="1290"/>
    </location>
</feature>
<feature type="strand" evidence="16">
    <location>
        <begin position="1296"/>
        <end position="1298"/>
    </location>
</feature>
<feature type="helix" evidence="16">
    <location>
        <begin position="1301"/>
        <end position="1312"/>
    </location>
</feature>
<feature type="turn" evidence="16">
    <location>
        <begin position="1313"/>
        <end position="1315"/>
    </location>
</feature>
<feature type="strand" evidence="16">
    <location>
        <begin position="1330"/>
        <end position="1334"/>
    </location>
</feature>
<feature type="strand" evidence="16">
    <location>
        <begin position="1336"/>
        <end position="1338"/>
    </location>
</feature>
<feature type="strand" evidence="16">
    <location>
        <begin position="1340"/>
        <end position="1342"/>
    </location>
</feature>
<feature type="strand" evidence="16">
    <location>
        <begin position="1350"/>
        <end position="1353"/>
    </location>
</feature>
<feature type="strand" evidence="16">
    <location>
        <begin position="1355"/>
        <end position="1357"/>
    </location>
</feature>
<feature type="strand" evidence="16">
    <location>
        <begin position="1361"/>
        <end position="1363"/>
    </location>
</feature>
<feature type="strand" evidence="16">
    <location>
        <begin position="1365"/>
        <end position="1369"/>
    </location>
</feature>
<feature type="turn" evidence="16">
    <location>
        <begin position="1372"/>
        <end position="1374"/>
    </location>
</feature>
<feature type="strand" evidence="16">
    <location>
        <begin position="1382"/>
        <end position="1385"/>
    </location>
</feature>
<feature type="strand" evidence="16">
    <location>
        <begin position="1387"/>
        <end position="1390"/>
    </location>
</feature>
<feature type="strand" evidence="16">
    <location>
        <begin position="1395"/>
        <end position="1403"/>
    </location>
</feature>
<feature type="strand" evidence="16">
    <location>
        <begin position="1409"/>
        <end position="1419"/>
    </location>
</feature>
<feature type="strand" evidence="16">
    <location>
        <begin position="1421"/>
        <end position="1423"/>
    </location>
</feature>
<feature type="strand" evidence="16">
    <location>
        <begin position="1426"/>
        <end position="1434"/>
    </location>
</feature>
<feature type="strand" evidence="16">
    <location>
        <begin position="1437"/>
        <end position="1447"/>
    </location>
</feature>
<feature type="strand" evidence="16">
    <location>
        <begin position="1450"/>
        <end position="1457"/>
    </location>
</feature>
<feature type="strand" evidence="16">
    <location>
        <begin position="1471"/>
        <end position="1478"/>
    </location>
</feature>
<feature type="strand" evidence="16">
    <location>
        <begin position="1480"/>
        <end position="1483"/>
    </location>
</feature>
<feature type="strand" evidence="16">
    <location>
        <begin position="1485"/>
        <end position="1497"/>
    </location>
</feature>
<feature type="strand" evidence="16">
    <location>
        <begin position="1501"/>
        <end position="1504"/>
    </location>
</feature>
<feature type="turn" evidence="16">
    <location>
        <begin position="1506"/>
        <end position="1508"/>
    </location>
</feature>
<feature type="strand" evidence="16">
    <location>
        <begin position="1510"/>
        <end position="1515"/>
    </location>
</feature>
<feature type="strand" evidence="16">
    <location>
        <begin position="1521"/>
        <end position="1526"/>
    </location>
</feature>
<feature type="strand" evidence="16">
    <location>
        <begin position="1532"/>
        <end position="1536"/>
    </location>
</feature>
<feature type="strand" evidence="16">
    <location>
        <begin position="1542"/>
        <end position="1548"/>
    </location>
</feature>
<feature type="strand" evidence="16">
    <location>
        <begin position="1551"/>
        <end position="1553"/>
    </location>
</feature>
<feature type="strand" evidence="16">
    <location>
        <begin position="1565"/>
        <end position="1572"/>
    </location>
</feature>
<feature type="strand" evidence="16">
    <location>
        <begin position="1574"/>
        <end position="1578"/>
    </location>
</feature>
<feature type="turn" evidence="16">
    <location>
        <begin position="1583"/>
        <end position="1585"/>
    </location>
</feature>
<feature type="helix" evidence="16">
    <location>
        <begin position="1586"/>
        <end position="1589"/>
    </location>
</feature>
<feature type="strand" evidence="16">
    <location>
        <begin position="1590"/>
        <end position="1592"/>
    </location>
</feature>
<feature type="strand" evidence="16">
    <location>
        <begin position="1596"/>
        <end position="1599"/>
    </location>
</feature>
<feature type="strand" evidence="16">
    <location>
        <begin position="1602"/>
        <end position="1613"/>
    </location>
</feature>
<feature type="strand" evidence="16">
    <location>
        <begin position="1620"/>
        <end position="1625"/>
    </location>
</feature>
<feature type="strand" evidence="16">
    <location>
        <begin position="1633"/>
        <end position="1638"/>
    </location>
</feature>
<feature type="strand" evidence="16">
    <location>
        <begin position="1641"/>
        <end position="1645"/>
    </location>
</feature>
<feature type="strand" evidence="16">
    <location>
        <begin position="1647"/>
        <end position="1651"/>
    </location>
</feature>
<feature type="strand" evidence="16">
    <location>
        <begin position="1656"/>
        <end position="1658"/>
    </location>
</feature>
<feature type="strand" evidence="16">
    <location>
        <begin position="1664"/>
        <end position="1669"/>
    </location>
</feature>
<feature type="strand" evidence="16">
    <location>
        <begin position="1671"/>
        <end position="1678"/>
    </location>
</feature>
<feature type="strand" evidence="16">
    <location>
        <begin position="1681"/>
        <end position="1687"/>
    </location>
</feature>
<feature type="strand" evidence="16">
    <location>
        <begin position="1698"/>
        <end position="1708"/>
    </location>
</feature>
<feature type="strand" evidence="16">
    <location>
        <begin position="1711"/>
        <end position="1716"/>
    </location>
</feature>
<feature type="strand" evidence="16">
    <location>
        <begin position="1718"/>
        <end position="1724"/>
    </location>
</feature>
<feature type="strand" evidence="16">
    <location>
        <begin position="1730"/>
        <end position="1738"/>
    </location>
</feature>
<feature type="strand" evidence="16">
    <location>
        <begin position="1741"/>
        <end position="1749"/>
    </location>
</feature>
<feature type="strand" evidence="16">
    <location>
        <begin position="1751"/>
        <end position="1753"/>
    </location>
</feature>
<feature type="strand" evidence="16">
    <location>
        <begin position="1755"/>
        <end position="1758"/>
    </location>
</feature>
<feature type="strand" evidence="16">
    <location>
        <begin position="1762"/>
        <end position="1766"/>
    </location>
</feature>
<feature type="strand" evidence="16">
    <location>
        <begin position="1776"/>
        <end position="1778"/>
    </location>
</feature>
<feature type="helix" evidence="16">
    <location>
        <begin position="1781"/>
        <end position="1783"/>
    </location>
</feature>
<feature type="strand" evidence="16">
    <location>
        <begin position="1789"/>
        <end position="1792"/>
    </location>
</feature>
<feature type="turn" evidence="16">
    <location>
        <begin position="1795"/>
        <end position="1797"/>
    </location>
</feature>
<feature type="helix" evidence="16">
    <location>
        <begin position="1810"/>
        <end position="1813"/>
    </location>
</feature>
<feature type="strand" evidence="16">
    <location>
        <begin position="1819"/>
        <end position="1823"/>
    </location>
</feature>
<feature type="strand" evidence="16">
    <location>
        <begin position="1825"/>
        <end position="1828"/>
    </location>
</feature>
<feature type="strand" evidence="16">
    <location>
        <begin position="1831"/>
        <end position="1835"/>
    </location>
</feature>
<feature type="turn" evidence="16">
    <location>
        <begin position="1839"/>
        <end position="1841"/>
    </location>
</feature>
<feature type="strand" evidence="16">
    <location>
        <begin position="1842"/>
        <end position="1847"/>
    </location>
</feature>
<feature type="strand" evidence="16">
    <location>
        <begin position="1852"/>
        <end position="1854"/>
    </location>
</feature>
<feature type="helix" evidence="16">
    <location>
        <begin position="1858"/>
        <end position="1863"/>
    </location>
</feature>
<feature type="turn" evidence="16">
    <location>
        <begin position="1864"/>
        <end position="1867"/>
    </location>
</feature>
<feature type="strand" evidence="16">
    <location>
        <begin position="1871"/>
        <end position="1877"/>
    </location>
</feature>
<feature type="turn" evidence="16">
    <location>
        <begin position="1878"/>
        <end position="1880"/>
    </location>
</feature>
<feature type="strand" evidence="16">
    <location>
        <begin position="1881"/>
        <end position="1887"/>
    </location>
</feature>
<feature type="strand" evidence="16">
    <location>
        <begin position="1893"/>
        <end position="1900"/>
    </location>
</feature>
<feature type="strand" evidence="16">
    <location>
        <begin position="1903"/>
        <end position="1912"/>
    </location>
</feature>
<feature type="strand" evidence="16">
    <location>
        <begin position="1918"/>
        <end position="1922"/>
    </location>
</feature>
<feature type="helix" evidence="16">
    <location>
        <begin position="1924"/>
        <end position="1930"/>
    </location>
</feature>
<feature type="strand" evidence="16">
    <location>
        <begin position="1949"/>
        <end position="1953"/>
    </location>
</feature>
<feature type="strand" evidence="16">
    <location>
        <begin position="1959"/>
        <end position="1964"/>
    </location>
</feature>
<feature type="strand" evidence="16">
    <location>
        <begin position="1966"/>
        <end position="1968"/>
    </location>
</feature>
<feature type="strand" evidence="16">
    <location>
        <begin position="1970"/>
        <end position="1975"/>
    </location>
</feature>
<feature type="strand" evidence="16">
    <location>
        <begin position="1981"/>
        <end position="1987"/>
    </location>
</feature>
<feature type="strand" evidence="16">
    <location>
        <begin position="1993"/>
        <end position="2001"/>
    </location>
</feature>
<feature type="strand" evidence="16">
    <location>
        <begin position="2003"/>
        <end position="2014"/>
    </location>
</feature>
<feature type="helix" evidence="16">
    <location>
        <begin position="2017"/>
        <end position="2029"/>
    </location>
</feature>
<feature type="strand" evidence="16">
    <location>
        <begin position="2037"/>
        <end position="2047"/>
    </location>
</feature>
<feature type="helix" evidence="16">
    <location>
        <begin position="2051"/>
        <end position="2053"/>
    </location>
</feature>
<feature type="turn" evidence="16">
    <location>
        <begin position="2054"/>
        <end position="2056"/>
    </location>
</feature>
<feature type="strand" evidence="16">
    <location>
        <begin position="2057"/>
        <end position="2064"/>
    </location>
</feature>
<feature type="strand" evidence="16">
    <location>
        <begin position="2067"/>
        <end position="2075"/>
    </location>
</feature>
<feature type="helix" evidence="16">
    <location>
        <begin position="2077"/>
        <end position="2079"/>
    </location>
</feature>
<feature type="strand" evidence="16">
    <location>
        <begin position="2081"/>
        <end position="2086"/>
    </location>
</feature>
<feature type="strand" evidence="16">
    <location>
        <begin position="2095"/>
        <end position="2102"/>
    </location>
</feature>
<feature type="strand" evidence="16">
    <location>
        <begin position="2105"/>
        <end position="2115"/>
    </location>
</feature>
<feature type="strand" evidence="16">
    <location>
        <begin position="2118"/>
        <end position="2126"/>
    </location>
</feature>
<feature type="strand" evidence="16">
    <location>
        <begin position="2131"/>
        <end position="2140"/>
    </location>
</feature>
<feature type="strand" evidence="16">
    <location>
        <begin position="2146"/>
        <end position="2156"/>
    </location>
</feature>
<feature type="strand" evidence="16">
    <location>
        <begin position="2158"/>
        <end position="2167"/>
    </location>
</feature>
<feature type="strand" evidence="16">
    <location>
        <begin position="2169"/>
        <end position="2171"/>
    </location>
</feature>
<feature type="strand" evidence="16">
    <location>
        <begin position="2174"/>
        <end position="2180"/>
    </location>
</feature>
<feature type="strand" evidence="16">
    <location>
        <begin position="2182"/>
        <end position="2184"/>
    </location>
</feature>
<feature type="strand" evidence="16">
    <location>
        <begin position="2186"/>
        <end position="2190"/>
    </location>
</feature>
<feature type="strand" evidence="16">
    <location>
        <begin position="2192"/>
        <end position="2202"/>
    </location>
</feature>
<feature type="strand" evidence="16">
    <location>
        <begin position="2217"/>
        <end position="2222"/>
    </location>
</feature>
<feature type="helix" evidence="16">
    <location>
        <begin position="2224"/>
        <end position="2226"/>
    </location>
</feature>
<feature type="helix" evidence="16">
    <location>
        <begin position="2230"/>
        <end position="2232"/>
    </location>
</feature>
<feature type="strand" evidence="16">
    <location>
        <begin position="2237"/>
        <end position="2240"/>
    </location>
</feature>
<feature type="strand" evidence="16">
    <location>
        <begin position="2242"/>
        <end position="2245"/>
    </location>
</feature>
<feature type="helix" evidence="16">
    <location>
        <begin position="2247"/>
        <end position="2259"/>
    </location>
</feature>
<feature type="strand" evidence="16">
    <location>
        <begin position="2265"/>
        <end position="2267"/>
    </location>
</feature>
<feature type="turn" evidence="16">
    <location>
        <begin position="2275"/>
        <end position="2277"/>
    </location>
</feature>
<feature type="helix" evidence="16">
    <location>
        <begin position="2283"/>
        <end position="2286"/>
    </location>
</feature>
<feature type="helix" evidence="16">
    <location>
        <begin position="2288"/>
        <end position="2300"/>
    </location>
</feature>
<feature type="strand" evidence="16">
    <location>
        <begin position="2305"/>
        <end position="2313"/>
    </location>
</feature>
<feature type="strand" evidence="16">
    <location>
        <begin position="2319"/>
        <end position="2324"/>
    </location>
</feature>
<feature type="helix" evidence="16">
    <location>
        <begin position="2328"/>
        <end position="2330"/>
    </location>
</feature>
<feature type="helix" evidence="16">
    <location>
        <begin position="2342"/>
        <end position="2345"/>
    </location>
</feature>
<feature type="helix" evidence="16">
    <location>
        <begin position="2349"/>
        <end position="2362"/>
    </location>
</feature>
<feature type="helix" evidence="16">
    <location>
        <begin position="2365"/>
        <end position="2372"/>
    </location>
</feature>
<feature type="turn" evidence="16">
    <location>
        <begin position="2376"/>
        <end position="2379"/>
    </location>
</feature>
<feature type="turn" evidence="16">
    <location>
        <begin position="2383"/>
        <end position="2388"/>
    </location>
</feature>
<feature type="helix" evidence="16">
    <location>
        <begin position="2389"/>
        <end position="2397"/>
    </location>
</feature>
<feature type="turn" evidence="16">
    <location>
        <begin position="2401"/>
        <end position="2404"/>
    </location>
</feature>
<feature type="helix" evidence="16">
    <location>
        <begin position="2407"/>
        <end position="2410"/>
    </location>
</feature>
<feature type="helix" evidence="16">
    <location>
        <begin position="2417"/>
        <end position="2431"/>
    </location>
</feature>
<feature type="helix" evidence="16">
    <location>
        <begin position="2436"/>
        <end position="2440"/>
    </location>
</feature>
<feature type="helix" evidence="16">
    <location>
        <begin position="2443"/>
        <end position="2446"/>
    </location>
</feature>
<feature type="helix" evidence="16">
    <location>
        <begin position="2449"/>
        <end position="2459"/>
    </location>
</feature>
<feature type="strand" evidence="16">
    <location>
        <begin position="2465"/>
        <end position="2469"/>
    </location>
</feature>
<feature type="strand" evidence="16">
    <location>
        <begin position="2479"/>
        <end position="2484"/>
    </location>
</feature>
<feature type="strand" evidence="16">
    <location>
        <begin position="2487"/>
        <end position="2493"/>
    </location>
</feature>
<feature type="strand" evidence="16">
    <location>
        <begin position="2495"/>
        <end position="2504"/>
    </location>
</feature>
<feature type="strand" evidence="16">
    <location>
        <begin position="2514"/>
        <end position="2516"/>
    </location>
</feature>
<feature type="strand" evidence="16">
    <location>
        <begin position="2522"/>
        <end position="2525"/>
    </location>
</feature>
<feature type="helix" evidence="16">
    <location>
        <begin position="2526"/>
        <end position="2528"/>
    </location>
</feature>
<feature type="strand" evidence="16">
    <location>
        <begin position="2530"/>
        <end position="2535"/>
    </location>
</feature>
<feature type="turn" evidence="16">
    <location>
        <begin position="2537"/>
        <end position="2539"/>
    </location>
</feature>
<feature type="strand" evidence="16">
    <location>
        <begin position="2541"/>
        <end position="2547"/>
    </location>
</feature>
<feature type="helix" evidence="16">
    <location>
        <begin position="2548"/>
        <end position="2550"/>
    </location>
</feature>
<feature type="strand" evidence="16">
    <location>
        <begin position="2553"/>
        <end position="2558"/>
    </location>
</feature>
<feature type="strand" evidence="16">
    <location>
        <begin position="2564"/>
        <end position="2570"/>
    </location>
</feature>
<feature type="strand" evidence="16">
    <location>
        <begin position="2576"/>
        <end position="2584"/>
    </location>
</feature>
<feature type="strand" evidence="16">
    <location>
        <begin position="2590"/>
        <end position="2597"/>
    </location>
</feature>
<feature type="strand" evidence="16">
    <location>
        <begin position="2599"/>
        <end position="2602"/>
    </location>
</feature>
<feature type="strand" evidence="16">
    <location>
        <begin position="2608"/>
        <end position="2616"/>
    </location>
</feature>
<feature type="strand" evidence="16">
    <location>
        <begin position="2618"/>
        <end position="2628"/>
    </location>
</feature>
<feature type="strand" evidence="16">
    <location>
        <begin position="2630"/>
        <end position="2635"/>
    </location>
</feature>
<feature type="helix" evidence="16">
    <location>
        <begin position="2637"/>
        <end position="2639"/>
    </location>
</feature>
<feature type="strand" evidence="16">
    <location>
        <begin position="2641"/>
        <end position="2646"/>
    </location>
</feature>
<feature type="strand" evidence="16">
    <location>
        <begin position="2649"/>
        <end position="2656"/>
    </location>
</feature>
<feature type="strand" evidence="16">
    <location>
        <begin position="2662"/>
        <end position="2665"/>
    </location>
</feature>
<feature type="turn" evidence="16">
    <location>
        <begin position="2670"/>
        <end position="2672"/>
    </location>
</feature>
<feature type="helix" evidence="16">
    <location>
        <begin position="2678"/>
        <end position="2680"/>
    </location>
</feature>
<feature type="turn" evidence="16">
    <location>
        <begin position="2685"/>
        <end position="2688"/>
    </location>
</feature>
<feature type="strand" evidence="16">
    <location>
        <begin position="2689"/>
        <end position="2691"/>
    </location>
</feature>
<feature type="strand" evidence="16">
    <location>
        <begin position="2694"/>
        <end position="2698"/>
    </location>
</feature>
<feature type="turn" evidence="16">
    <location>
        <begin position="2699"/>
        <end position="2702"/>
    </location>
</feature>
<feature type="strand" evidence="16">
    <location>
        <begin position="2703"/>
        <end position="2706"/>
    </location>
</feature>
<feature type="strand" evidence="16">
    <location>
        <begin position="2713"/>
        <end position="2718"/>
    </location>
</feature>
<feature type="turn" evidence="16">
    <location>
        <begin position="2730"/>
        <end position="2732"/>
    </location>
</feature>
<feature type="helix" evidence="16">
    <location>
        <begin position="2733"/>
        <end position="2751"/>
    </location>
</feature>
<feature type="strand" evidence="16">
    <location>
        <begin position="2753"/>
        <end position="2755"/>
    </location>
</feature>
<feature type="helix" evidence="16">
    <location>
        <begin position="2762"/>
        <end position="2764"/>
    </location>
</feature>
<feature type="helix" evidence="16">
    <location>
        <begin position="2812"/>
        <end position="2820"/>
    </location>
</feature>
<feature type="helix" evidence="16">
    <location>
        <begin position="2823"/>
        <end position="2825"/>
    </location>
</feature>
<feature type="strand" evidence="16">
    <location>
        <begin position="2829"/>
        <end position="2831"/>
    </location>
</feature>
<feature type="helix" evidence="16">
    <location>
        <begin position="2833"/>
        <end position="2835"/>
    </location>
</feature>
<feature type="helix" evidence="16">
    <location>
        <begin position="2841"/>
        <end position="2851"/>
    </location>
</feature>
<feature type="turn" evidence="16">
    <location>
        <begin position="2858"/>
        <end position="2860"/>
    </location>
</feature>
<feature type="strand" evidence="16">
    <location>
        <begin position="2861"/>
        <end position="2863"/>
    </location>
</feature>
<feature type="strand" evidence="16">
    <location>
        <begin position="2868"/>
        <end position="2870"/>
    </location>
</feature>
<feature type="helix" evidence="16">
    <location>
        <begin position="2876"/>
        <end position="2885"/>
    </location>
</feature>
<feature type="turn" evidence="16">
    <location>
        <begin position="2890"/>
        <end position="2896"/>
    </location>
</feature>
<feature type="helix" evidence="16">
    <location>
        <begin position="2897"/>
        <end position="2899"/>
    </location>
</feature>
<feature type="helix" evidence="16">
    <location>
        <begin position="2902"/>
        <end position="2907"/>
    </location>
</feature>
<feature type="helix" evidence="16">
    <location>
        <begin position="2914"/>
        <end position="2916"/>
    </location>
</feature>
<feature type="helix" evidence="16">
    <location>
        <begin position="2948"/>
        <end position="2950"/>
    </location>
</feature>
<feature type="strand" evidence="16">
    <location>
        <begin position="2951"/>
        <end position="2953"/>
    </location>
</feature>
<feature type="helix" evidence="16">
    <location>
        <begin position="2972"/>
        <end position="2989"/>
    </location>
</feature>
<feature type="helix" evidence="16">
    <location>
        <begin position="3030"/>
        <end position="3040"/>
    </location>
</feature>
<dbReference type="RefSeq" id="NP_001395183.1">
    <property type="nucleotide sequence ID" value="NM_001408254.1"/>
</dbReference>
<dbReference type="PDB" id="8FJP">
    <property type="method" value="EM"/>
    <property type="resolution" value="3.30 A"/>
    <property type="chains" value="A=1-3364"/>
</dbReference>
<dbReference type="PDBsum" id="8FJP"/>
<dbReference type="SMR" id="A0A1S4FPC9"/>
<dbReference type="EnsemblMetazoa" id="AAEL009993-RA">
    <property type="protein sequence ID" value="AAEL009993-PA"/>
    <property type="gene ID" value="AAEL009993"/>
</dbReference>
<dbReference type="GeneID" id="5572722"/>
<dbReference type="VEuPathDB" id="VectorBase:AAEL009993"/>
<dbReference type="InParanoid" id="A0A1S4FPC9"/>
<dbReference type="OrthoDB" id="5426877at2759"/>
<dbReference type="Proteomes" id="UP000008820">
    <property type="component" value="Chromosome 3"/>
</dbReference>
<dbReference type="GO" id="GO:0005615">
    <property type="term" value="C:extracellular space"/>
    <property type="evidence" value="ECO:0000314"/>
    <property type="project" value="UniProtKB"/>
</dbReference>
<dbReference type="GO" id="GO:0005886">
    <property type="term" value="C:plasma membrane"/>
    <property type="evidence" value="ECO:0007669"/>
    <property type="project" value="UniProtKB-SubCell"/>
</dbReference>
<dbReference type="Gene3D" id="2.180.10.10">
    <property type="entry name" value="RHS repeat-associated core"/>
    <property type="match status" value="2"/>
</dbReference>
<dbReference type="InterPro" id="IPR022385">
    <property type="entry name" value="Rhs_assc_core"/>
</dbReference>
<dbReference type="InterPro" id="IPR050708">
    <property type="entry name" value="T6SS_VgrG/RHS"/>
</dbReference>
<dbReference type="InterPro" id="IPR028901">
    <property type="entry name" value="Tox-SGS_dom"/>
</dbReference>
<dbReference type="NCBIfam" id="TIGR03696">
    <property type="entry name" value="Rhs_assc_core"/>
    <property type="match status" value="1"/>
</dbReference>
<dbReference type="PANTHER" id="PTHR32305">
    <property type="match status" value="1"/>
</dbReference>
<dbReference type="PANTHER" id="PTHR32305:SF15">
    <property type="entry name" value="PROTEIN RHSA-RELATED"/>
    <property type="match status" value="1"/>
</dbReference>
<dbReference type="Pfam" id="PF15651">
    <property type="entry name" value="Tox-SGS"/>
    <property type="match status" value="1"/>
</dbReference>
<evidence type="ECO:0000255" key="1"/>
<evidence type="ECO:0000255" key="2">
    <source>
        <dbReference type="PROSITE-ProRule" id="PRU00498"/>
    </source>
</evidence>
<evidence type="ECO:0000269" key="3">
    <source>
    </source>
</evidence>
<evidence type="ECO:0000269" key="4">
    <source>
    </source>
</evidence>
<evidence type="ECO:0000269" key="5">
    <source>
    </source>
</evidence>
<evidence type="ECO:0000269" key="6">
    <source>
    </source>
</evidence>
<evidence type="ECO:0000269" key="7">
    <source>
    </source>
</evidence>
<evidence type="ECO:0000303" key="8">
    <source>
    </source>
</evidence>
<evidence type="ECO:0000303" key="9">
    <source>
    </source>
</evidence>
<evidence type="ECO:0000303" key="10">
    <source>
    </source>
</evidence>
<evidence type="ECO:0000303" key="11">
    <source>
    </source>
</evidence>
<evidence type="ECO:0000305" key="12"/>
<evidence type="ECO:0000312" key="13">
    <source>
        <dbReference type="EnsemblMetazoa" id="AAEL009993-PA"/>
    </source>
</evidence>
<evidence type="ECO:0000312" key="14">
    <source>
        <dbReference type="Proteomes" id="UP000008820"/>
    </source>
</evidence>
<evidence type="ECO:0007744" key="15">
    <source>
        <dbReference type="PDB" id="8FJP"/>
    </source>
</evidence>
<evidence type="ECO:0007829" key="16">
    <source>
        <dbReference type="PDB" id="8FJP"/>
    </source>
</evidence>
<sequence length="3364" mass="379959">MLRIKEVKKYNNRLGFPAGKEVRIRPLLEAGGFARGPIYVKYGRELSKHDPSSRSMAWNATVFDTALNHPTRPWTVTVVGGKKMVLGVRKEGLGFSEDDPPRSLNVKGGDDMADENYGGGNSTIVLVKSGGKDFAIGLDDLKELNSFGIGAGNGKLSLALGNPVNVLTGVVLPVEQRDGSVAYVAVNSDTKSVIYKVDAKGLQKNQKIDVNVRASAEKILLTKNNELLHISPQGLNVYSVQGSASTFKYFCPYFSSFGGWSRRFVDTVTLMDEGGNQEALIGTGPKGIEYMPVDEKCKNYVVEGVQDAKHAVVAPGATKEGNDIKVLGVYNGELCLLTLEVVDAVEPKLDQGSPAKPSAERVKATKSSKVTVRSGALSKPVSWLRDSLDEASFKNIVDKLSGKIRFSFPLVDLQGRMGLPIKLVVYYDESDGEDMSVLGRHWTLGRDCIVLDHGNTVFEDKQDYYLVKDQMKIRLERDWTKPSANGKVLFNMVGNKDATFEYTAREEKWEVSDGKIRYVYGMNNQGVVSVPGWADWYGPSANYDSKKIHSVQWNLVEISSVAHRDVKLKYTYTPLDPSTHTMHLLSITDDSNKTTIKFSYKTIEGLGKQVSSGLVKEHKFINNKLLEKVEIDSPSTAQVLKLTSTKIDSLYYLESIKQDDDPDPVLGFEYNKDDKLKPRVQQIRLPSKSVVDFKYTKQAIATQQFEQEIAKMADLYTGNEYSLEIEKTVGETDLYVRLKDSAGKNDFIKNQSIRIESYRGFKIKSYSPFMMHSYIAILVRYAEEKEKLHNKIYILNKGEDDSWKLDTTNNNSRVSEDKKFKYDFQEDSFVYYHSKKVHFEYKKSGTKVWSYTSKDIGDVDAFTLMNRGAVYCKNDLVLIRWDALGKLQQETLSDAKSKPSISDVDTFFEYIDVQGTFPEDEAEAKKEVDDYKRDLKESLSDYGLILYNNVVALRTIKLSFTGRITVKVLLYLLKHDYTVSSRSSIELQGGDLAKFNLTLDVFDEHKTKNTNDLDKYRFEFKKQGSKFKLTYIEATDKDNKPTKPSSQNEKLIGQYERRMKIPLDFEKYMMQVNQEGIIVNDHQIIHDNGNFIAKQLDRDTLKLTKFKIPLGAFSNFKKDSDGDEIKLCTKTEQERTESCVSLQTNSARNVSIKYPYYLVTQKKNDIKVLPLKINSRGWEDSVDYRGEILHGSSSHAAMVTTRMSDQKTIVRPLKALNKINKIYAQVISEEKLTTPYDSYVIKYEYEDPVVSMNQVAFKTTIVVPGGGKSATGYYRETNDLQDNQQIVQVMTADNQVFDPEYVKRMNEMQQEEDKQRDGAQLDAEQTITDKSGYHPILKTTPYSANQELVQFLGFEDYEDMTGWTVNRRPIQESNIRRNEFSATGRNFLLLRKGEELIAEFPNTAYYDTFIASTWIRTTQETAVGSTTDMLSLYVDNKPMKGTIKQTIDEWIYVEADSREIAVPESTAVKRVHFKIIVKPTGADDVHVDHVRLSPVNFNFEGSVYDARIGQRTATIQTNGFVSRRLYDAYNRRIAEVDETGNIKYLASYSKRVGNKKDEKKREGGISSRLQMRAKHSWVESFSPYTMEKRWQIGGAATVEPNQAILQGQIISKEKFSSESICIRLVYSMSGSSQLSLTIGKTTVVVKPNAVQYKGHTATTPSNAELVIFATPKLTSIWVDGHLRIEAPETHAKFNNEAVSLQTSGPVGIKDVIVMEDAEIQVSYLNRDSKPLQEILLLDSSNVLIRQMMYDVIGRRVAETVWVQKSLIDGRSTAFKAFQYHDDFVSNDNPTDRNYFLNTGPMQGYVATATNTIYEGYPYSQTVYYNNPLEIRHKVGHPGVKNSIKGAFVHQYAIASDLAFIQRNYPKNEGYRQEEEKSPNGKKHVVVYNRRNKKVAEYTQVKDYNNILTTYIYDQHGNQIQMLPPSYYHEKSRSGDYQPEKQVVASPWAVTSKYDSTGEFITSKETPDGGRVEFIYNEYNQLRYQIHYKEDKQADKIVYFLYNIFGRMCEAGQVPANPTTLQQVRETTKSHQAIPNRDQAVYFDYGETESEPSLRGRIQRTVKKNKEVLFSEVMFFDEESNIIRKSYISPTTNETLSLVYLQENDKVSGIQYPFGVDGKQLILKYKHNLRGEIVEVARVEQKTSGQTEFIPIAGIDHDAEGKVTKISHNYGDSKFDQTYKYVAPGYLVEIANNFLTEKLYYTEKGYGCEPTGDGSILRTEFKASWHDKCDQNLIPLTARAFVSGGIDFTTAETCFDALLNLGYIDTTGRPVKTFYPDLETGLPMKCATPSNWRYISEKMLEQGYPEHYGHAYDYGSHGELIAAKSFVGKEKDSLTAPLSKASFANAGMKSHELDRFWDSLSRSINKVEGTKAIFEGTQQLTTGLVGSVIHKPKLESLLEGKGGDSSICTPWSSGDRTEEAKCKREYQQAFDKLKLKQVIQSLQEPVRKNVLRILKNTLASMLGNSPGDVESFSIDPNGNHGVFYTGFKRFELKYKHQKNQIATIKEGTKQQEKMIVHDDEGNVIKALHKKIDKIEYDPLTQRVSRIEMSDRSRTLEFGYDFRGERTFKRVRNKDNDIISVNYYVRDNKGNVLVEYKQEYPNPKDTNKPINTVTAYIHGPLGLLGFFRNNKYYNVLLDHEGSTRLVIHQGKVVAAYDYLPYGQMIRKYGSNPEAHIAFRYTGQEFDEETGLYNYHARLYDPDIGRFFQMDPMEQYASPYKYAGNSPVSQIDPDGQIAVTLVLMIIGAIVGAYLGAASANNSWNPAKWAWGDKKTWIGLFAGAIMGAFAVYGGAATFSYFTAMFGGSMIAGALATGVISVAGAFLGAAAASNQWNPAKWDWTSPAVWNGLLSGASIAVSFPSGFVGITRSFMSISSNLVKMIYASLMVGGFLLFVYLGGGMANNFNFQISQWDWKSPRTWFGMIEGASTIFMGTAGTAKHGAAKVYNVVKPNGLKMIWHKVNIPSKAFTMRRVKDTIILTWYKNGQSISKQILKTTVKADLAKIPKDFIMIHRGFFMPYQRIGYAAIAMPSMAGLMFKKNQYFFTNHPNGTLTKHVRKKRSAPMSSSAASPSVSNFLNDFFENMSELFDSFFSQTEHSHQDSQSSLSIGASYGRPSNESYHKSFQKLCYSPDSDGNQIICPQRESTVNIFSKGETFAPEAFGQDLFSRCLPLTWHDRPSIACDGEQTTFIYTPNQNIRVFDMVDGWLMLARIAPAALRNLKAGFSFLRDVVFSDEREQTVQVNDLSRCKQDLEVELLDLKRVMLKKQPNEVKWAQPILNDLEDDIGEFLSERKPSEKEFELLQERLSALREEIMENSSVATELNLSTLIGDMLKKMDGVNVGLNGDVRDMISTLSGMVPFSSSNLLA</sequence>